<accession>B2J434</accession>
<organism>
    <name type="scientific">Nostoc punctiforme (strain ATCC 29133 / PCC 73102)</name>
    <dbReference type="NCBI Taxonomy" id="63737"/>
    <lineage>
        <taxon>Bacteria</taxon>
        <taxon>Bacillati</taxon>
        <taxon>Cyanobacteriota</taxon>
        <taxon>Cyanophyceae</taxon>
        <taxon>Nostocales</taxon>
        <taxon>Nostocaceae</taxon>
        <taxon>Nostoc</taxon>
    </lineage>
</organism>
<protein>
    <recommendedName>
        <fullName evidence="1">DNA mismatch repair protein MutS</fullName>
    </recommendedName>
</protein>
<gene>
    <name evidence="1" type="primary">mutS</name>
    <name type="ordered locus">Npun_R3761</name>
</gene>
<sequence length="892" mass="98858">MTASHSETPSTKPDASTFISDHLQVDRSKLSQMYLHYVETKDKYPHAVLLYRVGDFFECYFQDAVKLAQELELVLTSKQAGEQGRVAMSGVPHHAWERYATLLVEKGYAVVICDQVEDASEAAGRLVRREVTRILTPGTLLEEGMLKSSRNNYLAAVVIAANHWGLAYADISTGEFLTTQGSDLEHLTQELMRLQPSEVLVPTNAPDLGSLLRPGETSPHLPECLPPSFCYSLRSQVPFSQGEARPRLLQKFKVRSLEGLGCDRFPLAVRAAGGLLEYLEDTQKENPVPLQRLRTYTVTDYLIVDSQTRRNLEITQTVRDGTFHGSLLWSLDRTSTAMGGRALRRWLLQPLLDIKGIRARQDTIQELMENTPLRQDLRQLLRQIYDLERLTGRAGSGTANARDLVALADSLSRLPELSHLVTESHSPFLKALQKVPSVLEELAQKLHAHLVESPPILIKEGGLIRPSVNPLLDERKATVEADQQWIANLEVDERAKTGISTLKVGFNKTFGYYISISRTKADQVPANYIRKQTLTNEERYITPDLKEREARILSARDDLNQLEYEIFTALREEVAQEAEVIRNLSRAVAAADVLCGLAELAVHQGYCRPEMLSGREINIVDGRHPVVEQSLPAGFFVPNSTQLGQESLVSSHLSLADNQEQITNTSLREAAPTTTLSTSDQGQMTNDNPDLIILTGPNASGKSCYLRQVGLIQLMAQIGSFVPARLAKLGICDRIFTRVGAVDDLATGQSTFMVEMNETANILNHATSRSLVLLDEIGRGTATFDGLSIAWAVAEYIAVDIRARTIFATHYHELNELASIVPNVANYQVTVKELPDQIIFLHQVQPGGADKSYGIEAGRLAGLPAVVIQRAKQVMGQIEKHSKIAMGLQNLD</sequence>
<reference key="1">
    <citation type="journal article" date="2013" name="Plant Physiol.">
        <title>A Nostoc punctiforme Sugar Transporter Necessary to Establish a Cyanobacterium-Plant Symbiosis.</title>
        <authorList>
            <person name="Ekman M."/>
            <person name="Picossi S."/>
            <person name="Campbell E.L."/>
            <person name="Meeks J.C."/>
            <person name="Flores E."/>
        </authorList>
    </citation>
    <scope>NUCLEOTIDE SEQUENCE [LARGE SCALE GENOMIC DNA]</scope>
    <source>
        <strain>ATCC 29133 / PCC 73102</strain>
    </source>
</reference>
<keyword id="KW-0067">ATP-binding</keyword>
<keyword id="KW-0227">DNA damage</keyword>
<keyword id="KW-0234">DNA repair</keyword>
<keyword id="KW-0238">DNA-binding</keyword>
<keyword id="KW-0547">Nucleotide-binding</keyword>
<keyword id="KW-1185">Reference proteome</keyword>
<name>MUTS_NOSP7</name>
<comment type="function">
    <text evidence="1">This protein is involved in the repair of mismatches in DNA. It is possible that it carries out the mismatch recognition step. This protein has a weak ATPase activity.</text>
</comment>
<comment type="similarity">
    <text evidence="1">Belongs to the DNA mismatch repair MutS family.</text>
</comment>
<feature type="chain" id="PRO_1000118688" description="DNA mismatch repair protein MutS">
    <location>
        <begin position="1"/>
        <end position="892"/>
    </location>
</feature>
<feature type="region of interest" description="Disordered" evidence="2">
    <location>
        <begin position="663"/>
        <end position="684"/>
    </location>
</feature>
<feature type="binding site" evidence="1">
    <location>
        <begin position="696"/>
        <end position="703"/>
    </location>
    <ligand>
        <name>ATP</name>
        <dbReference type="ChEBI" id="CHEBI:30616"/>
    </ligand>
</feature>
<dbReference type="EMBL" id="CP001037">
    <property type="protein sequence ID" value="ACC82146.1"/>
    <property type="molecule type" value="Genomic_DNA"/>
</dbReference>
<dbReference type="RefSeq" id="WP_012410117.1">
    <property type="nucleotide sequence ID" value="NC_010628.1"/>
</dbReference>
<dbReference type="SMR" id="B2J434"/>
<dbReference type="STRING" id="63737.Npun_R3761"/>
<dbReference type="EnsemblBacteria" id="ACC82146">
    <property type="protein sequence ID" value="ACC82146"/>
    <property type="gene ID" value="Npun_R3761"/>
</dbReference>
<dbReference type="KEGG" id="npu:Npun_R3761"/>
<dbReference type="eggNOG" id="COG0249">
    <property type="taxonomic scope" value="Bacteria"/>
</dbReference>
<dbReference type="HOGENOM" id="CLU_002472_1_3_3"/>
<dbReference type="OrthoDB" id="9802448at2"/>
<dbReference type="PhylomeDB" id="B2J434"/>
<dbReference type="Proteomes" id="UP000001191">
    <property type="component" value="Chromosome"/>
</dbReference>
<dbReference type="GO" id="GO:0005829">
    <property type="term" value="C:cytosol"/>
    <property type="evidence" value="ECO:0007669"/>
    <property type="project" value="TreeGrafter"/>
</dbReference>
<dbReference type="GO" id="GO:0005524">
    <property type="term" value="F:ATP binding"/>
    <property type="evidence" value="ECO:0007669"/>
    <property type="project" value="UniProtKB-UniRule"/>
</dbReference>
<dbReference type="GO" id="GO:0140664">
    <property type="term" value="F:ATP-dependent DNA damage sensor activity"/>
    <property type="evidence" value="ECO:0007669"/>
    <property type="project" value="InterPro"/>
</dbReference>
<dbReference type="GO" id="GO:0003684">
    <property type="term" value="F:damaged DNA binding"/>
    <property type="evidence" value="ECO:0007669"/>
    <property type="project" value="UniProtKB-UniRule"/>
</dbReference>
<dbReference type="GO" id="GO:0030983">
    <property type="term" value="F:mismatched DNA binding"/>
    <property type="evidence" value="ECO:0007669"/>
    <property type="project" value="InterPro"/>
</dbReference>
<dbReference type="GO" id="GO:0006298">
    <property type="term" value="P:mismatch repair"/>
    <property type="evidence" value="ECO:0007669"/>
    <property type="project" value="UniProtKB-UniRule"/>
</dbReference>
<dbReference type="CDD" id="cd03284">
    <property type="entry name" value="ABC_MutS1"/>
    <property type="match status" value="1"/>
</dbReference>
<dbReference type="FunFam" id="1.10.1420.10:FF:000001">
    <property type="entry name" value="DNA mismatch repair protein MutS"/>
    <property type="match status" value="1"/>
</dbReference>
<dbReference type="FunFam" id="3.40.50.300:FF:000870">
    <property type="entry name" value="MutS protein homolog 4"/>
    <property type="match status" value="1"/>
</dbReference>
<dbReference type="Gene3D" id="1.10.1420.10">
    <property type="match status" value="2"/>
</dbReference>
<dbReference type="Gene3D" id="3.40.1170.10">
    <property type="entry name" value="DNA repair protein MutS, domain I"/>
    <property type="match status" value="1"/>
</dbReference>
<dbReference type="Gene3D" id="3.30.420.110">
    <property type="entry name" value="MutS, connector domain"/>
    <property type="match status" value="1"/>
</dbReference>
<dbReference type="Gene3D" id="3.40.50.300">
    <property type="entry name" value="P-loop containing nucleotide triphosphate hydrolases"/>
    <property type="match status" value="1"/>
</dbReference>
<dbReference type="HAMAP" id="MF_00096">
    <property type="entry name" value="MutS"/>
    <property type="match status" value="1"/>
</dbReference>
<dbReference type="InterPro" id="IPR005748">
    <property type="entry name" value="DNA_mismatch_repair_MutS"/>
</dbReference>
<dbReference type="InterPro" id="IPR007695">
    <property type="entry name" value="DNA_mismatch_repair_MutS-lik_N"/>
</dbReference>
<dbReference type="InterPro" id="IPR017261">
    <property type="entry name" value="DNA_mismatch_repair_MutS/MSH"/>
</dbReference>
<dbReference type="InterPro" id="IPR000432">
    <property type="entry name" value="DNA_mismatch_repair_MutS_C"/>
</dbReference>
<dbReference type="InterPro" id="IPR007861">
    <property type="entry name" value="DNA_mismatch_repair_MutS_clamp"/>
</dbReference>
<dbReference type="InterPro" id="IPR007696">
    <property type="entry name" value="DNA_mismatch_repair_MutS_core"/>
</dbReference>
<dbReference type="InterPro" id="IPR016151">
    <property type="entry name" value="DNA_mismatch_repair_MutS_N"/>
</dbReference>
<dbReference type="InterPro" id="IPR036187">
    <property type="entry name" value="DNA_mismatch_repair_MutS_sf"/>
</dbReference>
<dbReference type="InterPro" id="IPR007860">
    <property type="entry name" value="DNA_mmatch_repair_MutS_con_dom"/>
</dbReference>
<dbReference type="InterPro" id="IPR045076">
    <property type="entry name" value="MutS"/>
</dbReference>
<dbReference type="InterPro" id="IPR036678">
    <property type="entry name" value="MutS_con_dom_sf"/>
</dbReference>
<dbReference type="InterPro" id="IPR027417">
    <property type="entry name" value="P-loop_NTPase"/>
</dbReference>
<dbReference type="NCBIfam" id="NF003810">
    <property type="entry name" value="PRK05399.1"/>
    <property type="match status" value="1"/>
</dbReference>
<dbReference type="PANTHER" id="PTHR11361:SF34">
    <property type="entry name" value="DNA MISMATCH REPAIR PROTEIN MSH1, MITOCHONDRIAL"/>
    <property type="match status" value="1"/>
</dbReference>
<dbReference type="PANTHER" id="PTHR11361">
    <property type="entry name" value="DNA MISMATCH REPAIR PROTEIN MUTS FAMILY MEMBER"/>
    <property type="match status" value="1"/>
</dbReference>
<dbReference type="Pfam" id="PF01624">
    <property type="entry name" value="MutS_I"/>
    <property type="match status" value="1"/>
</dbReference>
<dbReference type="Pfam" id="PF05188">
    <property type="entry name" value="MutS_II"/>
    <property type="match status" value="1"/>
</dbReference>
<dbReference type="Pfam" id="PF05192">
    <property type="entry name" value="MutS_III"/>
    <property type="match status" value="1"/>
</dbReference>
<dbReference type="Pfam" id="PF05190">
    <property type="entry name" value="MutS_IV"/>
    <property type="match status" value="1"/>
</dbReference>
<dbReference type="Pfam" id="PF00488">
    <property type="entry name" value="MutS_V"/>
    <property type="match status" value="1"/>
</dbReference>
<dbReference type="PIRSF" id="PIRSF037677">
    <property type="entry name" value="DNA_mis_repair_Msh6"/>
    <property type="match status" value="1"/>
</dbReference>
<dbReference type="SMART" id="SM00534">
    <property type="entry name" value="MUTSac"/>
    <property type="match status" value="1"/>
</dbReference>
<dbReference type="SMART" id="SM00533">
    <property type="entry name" value="MUTSd"/>
    <property type="match status" value="1"/>
</dbReference>
<dbReference type="SUPFAM" id="SSF55271">
    <property type="entry name" value="DNA repair protein MutS, domain I"/>
    <property type="match status" value="1"/>
</dbReference>
<dbReference type="SUPFAM" id="SSF53150">
    <property type="entry name" value="DNA repair protein MutS, domain II"/>
    <property type="match status" value="1"/>
</dbReference>
<dbReference type="SUPFAM" id="SSF48334">
    <property type="entry name" value="DNA repair protein MutS, domain III"/>
    <property type="match status" value="1"/>
</dbReference>
<dbReference type="SUPFAM" id="SSF52540">
    <property type="entry name" value="P-loop containing nucleoside triphosphate hydrolases"/>
    <property type="match status" value="1"/>
</dbReference>
<dbReference type="PROSITE" id="PS00486">
    <property type="entry name" value="DNA_MISMATCH_REPAIR_2"/>
    <property type="match status" value="1"/>
</dbReference>
<evidence type="ECO:0000255" key="1">
    <source>
        <dbReference type="HAMAP-Rule" id="MF_00096"/>
    </source>
</evidence>
<evidence type="ECO:0000256" key="2">
    <source>
        <dbReference type="SAM" id="MobiDB-lite"/>
    </source>
</evidence>
<proteinExistence type="inferred from homology"/>